<dbReference type="EMBL" id="AY261366">
    <property type="status" value="NOT_ANNOTATED_CDS"/>
    <property type="molecule type" value="Genomic_DNA"/>
</dbReference>
<dbReference type="Proteomes" id="UP000000858">
    <property type="component" value="Segment"/>
</dbReference>
<dbReference type="GO" id="GO:0016020">
    <property type="term" value="C:membrane"/>
    <property type="evidence" value="ECO:0007669"/>
    <property type="project" value="UniProtKB-KW"/>
</dbReference>
<dbReference type="GO" id="GO:0055036">
    <property type="term" value="C:virion membrane"/>
    <property type="evidence" value="ECO:0007669"/>
    <property type="project" value="UniProtKB-SubCell"/>
</dbReference>
<sequence>MPYSRDITKFITATEPEVGLPLLALQHSKSIIGVILLVICLLFILIGIIILAVGGHATAGSIFVVLSLILGGGGFFLIYKDNS</sequence>
<name>VF84_ASFWA</name>
<evidence type="ECO:0000250" key="1">
    <source>
        <dbReference type="UniProtKB" id="Q07383"/>
    </source>
</evidence>
<evidence type="ECO:0000255" key="2"/>
<evidence type="ECO:0000305" key="3"/>
<reference key="1">
    <citation type="submission" date="2003-03" db="EMBL/GenBank/DDBJ databases">
        <title>African swine fever virus genomes.</title>
        <authorList>
            <person name="Kutish G.F."/>
            <person name="Rock D.L."/>
        </authorList>
    </citation>
    <scope>NUCLEOTIDE SEQUENCE [LARGE SCALE GENOMIC DNA]</scope>
</reference>
<organismHost>
    <name type="scientific">Ornithodoros</name>
    <name type="common">relapsing fever ticks</name>
    <dbReference type="NCBI Taxonomy" id="6937"/>
</organismHost>
<organismHost>
    <name type="scientific">Phacochoerus aethiopicus</name>
    <name type="common">Warthog</name>
    <dbReference type="NCBI Taxonomy" id="85517"/>
</organismHost>
<organismHost>
    <name type="scientific">Phacochoerus africanus</name>
    <name type="common">Warthog</name>
    <dbReference type="NCBI Taxonomy" id="41426"/>
</organismHost>
<organismHost>
    <name type="scientific">Potamochoerus larvatus</name>
    <name type="common">Bushpig</name>
    <dbReference type="NCBI Taxonomy" id="273792"/>
</organismHost>
<organismHost>
    <name type="scientific">Sus scrofa</name>
    <name type="common">Pig</name>
    <dbReference type="NCBI Taxonomy" id="9823"/>
</organismHost>
<comment type="subcellular location">
    <subcellularLocation>
        <location evidence="1">Virion membrane</location>
    </subcellularLocation>
</comment>
<comment type="induction">
    <text evidence="3">Expressed in the late phase of the viral replicative cycle.</text>
</comment>
<comment type="similarity">
    <text evidence="3">Belongs to the asfivirus EP84R family.</text>
</comment>
<organism>
    <name type="scientific">African swine fever virus (isolate Warthog/Namibia/Wart80/1980)</name>
    <name type="common">ASFV</name>
    <dbReference type="NCBI Taxonomy" id="561444"/>
    <lineage>
        <taxon>Viruses</taxon>
        <taxon>Varidnaviria</taxon>
        <taxon>Bamfordvirae</taxon>
        <taxon>Nucleocytoviricota</taxon>
        <taxon>Pokkesviricetes</taxon>
        <taxon>Asfuvirales</taxon>
        <taxon>Asfarviridae</taxon>
        <taxon>Asfivirus</taxon>
        <taxon>African swine fever virus</taxon>
    </lineage>
</organism>
<protein>
    <recommendedName>
        <fullName>Transmembrane protein EP84R</fullName>
        <shortName>pEP84R</shortName>
    </recommendedName>
</protein>
<gene>
    <name type="ordered locus">War-064</name>
</gene>
<keyword id="KW-0426">Late protein</keyword>
<keyword id="KW-0472">Membrane</keyword>
<keyword id="KW-0812">Transmembrane</keyword>
<keyword id="KW-1133">Transmembrane helix</keyword>
<keyword id="KW-0946">Virion</keyword>
<accession>P0CAL7</accession>
<feature type="chain" id="PRO_0000373748" description="Transmembrane protein EP84R">
    <location>
        <begin position="1"/>
        <end position="83"/>
    </location>
</feature>
<feature type="transmembrane region" description="Helical" evidence="2">
    <location>
        <begin position="31"/>
        <end position="51"/>
    </location>
</feature>
<feature type="transmembrane region" description="Helical" evidence="2">
    <location>
        <begin position="59"/>
        <end position="79"/>
    </location>
</feature>
<proteinExistence type="inferred from homology"/>